<evidence type="ECO:0000255" key="1">
    <source>
        <dbReference type="HAMAP-Rule" id="MF_00362"/>
    </source>
</evidence>
<evidence type="ECO:0000305" key="2"/>
<dbReference type="EMBL" id="CP001063">
    <property type="protein sequence ID" value="ACD10365.1"/>
    <property type="molecule type" value="Genomic_DNA"/>
</dbReference>
<dbReference type="RefSeq" id="WP_001207201.1">
    <property type="nucleotide sequence ID" value="NC_010658.1"/>
</dbReference>
<dbReference type="SMR" id="B2TWH1"/>
<dbReference type="STRING" id="344609.SbBS512_E4473"/>
<dbReference type="GeneID" id="93777909"/>
<dbReference type="KEGG" id="sbc:SbBS512_E4473"/>
<dbReference type="HOGENOM" id="CLU_092227_0_2_6"/>
<dbReference type="Proteomes" id="UP000001030">
    <property type="component" value="Chromosome"/>
</dbReference>
<dbReference type="GO" id="GO:0015934">
    <property type="term" value="C:large ribosomal subunit"/>
    <property type="evidence" value="ECO:0007669"/>
    <property type="project" value="InterPro"/>
</dbReference>
<dbReference type="GO" id="GO:0070180">
    <property type="term" value="F:large ribosomal subunit rRNA binding"/>
    <property type="evidence" value="ECO:0007669"/>
    <property type="project" value="UniProtKB-UniRule"/>
</dbReference>
<dbReference type="GO" id="GO:0003735">
    <property type="term" value="F:structural constituent of ribosome"/>
    <property type="evidence" value="ECO:0007669"/>
    <property type="project" value="InterPro"/>
</dbReference>
<dbReference type="GO" id="GO:0006412">
    <property type="term" value="P:translation"/>
    <property type="evidence" value="ECO:0007669"/>
    <property type="project" value="UniProtKB-UniRule"/>
</dbReference>
<dbReference type="CDD" id="cd05797">
    <property type="entry name" value="Ribosomal_L10"/>
    <property type="match status" value="1"/>
</dbReference>
<dbReference type="FunFam" id="3.30.70.1730:FF:000001">
    <property type="entry name" value="50S ribosomal protein L10"/>
    <property type="match status" value="1"/>
</dbReference>
<dbReference type="Gene3D" id="3.30.70.1730">
    <property type="match status" value="1"/>
</dbReference>
<dbReference type="Gene3D" id="6.10.250.2350">
    <property type="match status" value="1"/>
</dbReference>
<dbReference type="HAMAP" id="MF_00362">
    <property type="entry name" value="Ribosomal_uL10"/>
    <property type="match status" value="1"/>
</dbReference>
<dbReference type="InterPro" id="IPR001790">
    <property type="entry name" value="Ribosomal_uL10"/>
</dbReference>
<dbReference type="InterPro" id="IPR043141">
    <property type="entry name" value="Ribosomal_uL10-like_sf"/>
</dbReference>
<dbReference type="InterPro" id="IPR022973">
    <property type="entry name" value="Ribosomal_uL10_bac"/>
</dbReference>
<dbReference type="InterPro" id="IPR047865">
    <property type="entry name" value="Ribosomal_uL10_bac_type"/>
</dbReference>
<dbReference type="InterPro" id="IPR002363">
    <property type="entry name" value="Ribosomal_uL10_CS_bac"/>
</dbReference>
<dbReference type="NCBIfam" id="NF000955">
    <property type="entry name" value="PRK00099.1-1"/>
    <property type="match status" value="1"/>
</dbReference>
<dbReference type="PANTHER" id="PTHR11560">
    <property type="entry name" value="39S RIBOSOMAL PROTEIN L10, MITOCHONDRIAL"/>
    <property type="match status" value="1"/>
</dbReference>
<dbReference type="Pfam" id="PF00466">
    <property type="entry name" value="Ribosomal_L10"/>
    <property type="match status" value="1"/>
</dbReference>
<dbReference type="SUPFAM" id="SSF160369">
    <property type="entry name" value="Ribosomal protein L10-like"/>
    <property type="match status" value="1"/>
</dbReference>
<dbReference type="PROSITE" id="PS01109">
    <property type="entry name" value="RIBOSOMAL_L10"/>
    <property type="match status" value="1"/>
</dbReference>
<sequence length="165" mass="17712">MALNLQDKQAIVAEVSEVAKGALSAVVADSRGVTVDKMTELRKAGREAGVYMRVVRNTLLRRAVEGTPFECLKDAFVGPTLIAYSMEHPGAAARLFKEFAKANAKFEVKAAAFEGELIPASQIDRLATLPTYEEAIARLMATMKEASAGKLVRTLAAVRDAKEAA</sequence>
<reference key="1">
    <citation type="submission" date="2008-05" db="EMBL/GenBank/DDBJ databases">
        <title>Complete sequence of Shigella boydii serotype 18 strain BS512.</title>
        <authorList>
            <person name="Rasko D.A."/>
            <person name="Rosovitz M."/>
            <person name="Maurelli A.T."/>
            <person name="Myers G."/>
            <person name="Seshadri R."/>
            <person name="Cer R."/>
            <person name="Jiang L."/>
            <person name="Ravel J."/>
            <person name="Sebastian Y."/>
        </authorList>
    </citation>
    <scope>NUCLEOTIDE SEQUENCE [LARGE SCALE GENOMIC DNA]</scope>
    <source>
        <strain>CDC 3083-94 / BS512</strain>
    </source>
</reference>
<name>RL10_SHIB3</name>
<comment type="function">
    <text evidence="1">Forms part of the ribosomal stalk, playing a central role in the interaction of the ribosome with GTP-bound translation factors.</text>
</comment>
<comment type="subunit">
    <text evidence="1">Part of the ribosomal stalk of the 50S ribosomal subunit. The N-terminus interacts with L11 and the large rRNA to form the base of the stalk. The C-terminus forms an elongated spine to which L12 dimers bind in a sequential fashion forming a multimeric L10(L12)X complex.</text>
</comment>
<comment type="similarity">
    <text evidence="1">Belongs to the universal ribosomal protein uL10 family.</text>
</comment>
<feature type="chain" id="PRO_1000121016" description="Large ribosomal subunit protein uL10">
    <location>
        <begin position="1"/>
        <end position="165"/>
    </location>
</feature>
<feature type="modified residue" description="N6-acetyllysine" evidence="1">
    <location>
        <position position="37"/>
    </location>
</feature>
<feature type="modified residue" description="N6-acetyllysine" evidence="1">
    <location>
        <position position="105"/>
    </location>
</feature>
<organism>
    <name type="scientific">Shigella boydii serotype 18 (strain CDC 3083-94 / BS512)</name>
    <dbReference type="NCBI Taxonomy" id="344609"/>
    <lineage>
        <taxon>Bacteria</taxon>
        <taxon>Pseudomonadati</taxon>
        <taxon>Pseudomonadota</taxon>
        <taxon>Gammaproteobacteria</taxon>
        <taxon>Enterobacterales</taxon>
        <taxon>Enterobacteriaceae</taxon>
        <taxon>Shigella</taxon>
    </lineage>
</organism>
<keyword id="KW-0007">Acetylation</keyword>
<keyword id="KW-1185">Reference proteome</keyword>
<keyword id="KW-0687">Ribonucleoprotein</keyword>
<keyword id="KW-0689">Ribosomal protein</keyword>
<keyword id="KW-0694">RNA-binding</keyword>
<keyword id="KW-0699">rRNA-binding</keyword>
<protein>
    <recommendedName>
        <fullName evidence="1">Large ribosomal subunit protein uL10</fullName>
    </recommendedName>
    <alternativeName>
        <fullName evidence="2">50S ribosomal protein L10</fullName>
    </alternativeName>
</protein>
<gene>
    <name evidence="1" type="primary">rplJ</name>
    <name type="ordered locus">SbBS512_E4473</name>
</gene>
<proteinExistence type="inferred from homology"/>
<accession>B2TWH1</accession>